<name>GAL1_ECO27</name>
<gene>
    <name evidence="1" type="primary">galK</name>
    <name type="ordered locus">E2348C_0634</name>
</gene>
<sequence>MSLKEKTQSLFANAFGYPATRTIQAPGRVNLIGEHTDYNDGFVLPCAIDYQTVISCAPRDDRKVRVMAADYENQLDEFSLDAPIVAHENYQWANYVRGVVKHLQLRNNSFGGVDMVISGNVPQGAGLSSSASLEVAVGTVLQQLYHLPLDGAQIALNGQEAENQFVGCNCGIMDQLISALGKKDHALLIDCRSLGTKAVSMPKGVAVVIINSNFKRTLVGSEYNTRREQCETGARFFQQPALRDVTIEEFNAVAHELDPIVAKRVRHILTENARTVEAASALEQGDLKRMGELMAESHASMRDDFEITVPQIDTLVEIVKAVIGDKGGVRMTGGGFGGCIVALIPEELVPAVQQAVAEQYEAKTGIKETFYVCKPSQGAGQC</sequence>
<keyword id="KW-0067">ATP-binding</keyword>
<keyword id="KW-0119">Carbohydrate metabolism</keyword>
<keyword id="KW-0963">Cytoplasm</keyword>
<keyword id="KW-0299">Galactose metabolism</keyword>
<keyword id="KW-0418">Kinase</keyword>
<keyword id="KW-0460">Magnesium</keyword>
<keyword id="KW-0479">Metal-binding</keyword>
<keyword id="KW-0547">Nucleotide-binding</keyword>
<keyword id="KW-1185">Reference proteome</keyword>
<keyword id="KW-0808">Transferase</keyword>
<accession>B7ULN0</accession>
<evidence type="ECO:0000255" key="1">
    <source>
        <dbReference type="HAMAP-Rule" id="MF_00246"/>
    </source>
</evidence>
<feature type="chain" id="PRO_1000125377" description="Galactokinase">
    <location>
        <begin position="1"/>
        <end position="382"/>
    </location>
</feature>
<feature type="active site" description="Proton acceptor" evidence="1">
    <location>
        <position position="174"/>
    </location>
</feature>
<feature type="binding site" evidence="1">
    <location>
        <begin position="34"/>
        <end position="37"/>
    </location>
    <ligand>
        <name>substrate</name>
    </ligand>
</feature>
<feature type="binding site" evidence="1">
    <location>
        <begin position="124"/>
        <end position="130"/>
    </location>
    <ligand>
        <name>ATP</name>
        <dbReference type="ChEBI" id="CHEBI:30616"/>
    </ligand>
</feature>
<feature type="binding site" evidence="1">
    <location>
        <position position="130"/>
    </location>
    <ligand>
        <name>Mg(2+)</name>
        <dbReference type="ChEBI" id="CHEBI:18420"/>
    </ligand>
</feature>
<feature type="binding site" evidence="1">
    <location>
        <position position="162"/>
    </location>
    <ligand>
        <name>Mg(2+)</name>
        <dbReference type="ChEBI" id="CHEBI:18420"/>
    </ligand>
</feature>
<feature type="binding site" evidence="1">
    <location>
        <position position="223"/>
    </location>
    <ligand>
        <name>substrate</name>
    </ligand>
</feature>
<feature type="site" description="Transition state stabilizer" evidence="1">
    <location>
        <position position="28"/>
    </location>
</feature>
<protein>
    <recommendedName>
        <fullName evidence="1">Galactokinase</fullName>
        <ecNumber evidence="1">2.7.1.6</ecNumber>
    </recommendedName>
    <alternativeName>
        <fullName evidence="1">Galactose kinase</fullName>
    </alternativeName>
</protein>
<comment type="function">
    <text evidence="1">Catalyzes the transfer of the gamma-phosphate of ATP to D-galactose to form alpha-D-galactose-1-phosphate (Gal-1-P).</text>
</comment>
<comment type="catalytic activity">
    <reaction evidence="1">
        <text>alpha-D-galactose + ATP = alpha-D-galactose 1-phosphate + ADP + H(+)</text>
        <dbReference type="Rhea" id="RHEA:13553"/>
        <dbReference type="ChEBI" id="CHEBI:15378"/>
        <dbReference type="ChEBI" id="CHEBI:28061"/>
        <dbReference type="ChEBI" id="CHEBI:30616"/>
        <dbReference type="ChEBI" id="CHEBI:58336"/>
        <dbReference type="ChEBI" id="CHEBI:456216"/>
        <dbReference type="EC" id="2.7.1.6"/>
    </reaction>
</comment>
<comment type="pathway">
    <text evidence="1">Carbohydrate metabolism; galactose metabolism.</text>
</comment>
<comment type="subcellular location">
    <subcellularLocation>
        <location evidence="1">Cytoplasm</location>
    </subcellularLocation>
</comment>
<comment type="similarity">
    <text evidence="1">Belongs to the GHMP kinase family. GalK subfamily.</text>
</comment>
<proteinExistence type="inferred from homology"/>
<reference key="1">
    <citation type="journal article" date="2009" name="J. Bacteriol.">
        <title>Complete genome sequence and comparative genome analysis of enteropathogenic Escherichia coli O127:H6 strain E2348/69.</title>
        <authorList>
            <person name="Iguchi A."/>
            <person name="Thomson N.R."/>
            <person name="Ogura Y."/>
            <person name="Saunders D."/>
            <person name="Ooka T."/>
            <person name="Henderson I.R."/>
            <person name="Harris D."/>
            <person name="Asadulghani M."/>
            <person name="Kurokawa K."/>
            <person name="Dean P."/>
            <person name="Kenny B."/>
            <person name="Quail M.A."/>
            <person name="Thurston S."/>
            <person name="Dougan G."/>
            <person name="Hayashi T."/>
            <person name="Parkhill J."/>
            <person name="Frankel G."/>
        </authorList>
    </citation>
    <scope>NUCLEOTIDE SEQUENCE [LARGE SCALE GENOMIC DNA]</scope>
    <source>
        <strain>E2348/69 / EPEC</strain>
    </source>
</reference>
<dbReference type="EC" id="2.7.1.6" evidence="1"/>
<dbReference type="EMBL" id="FM180568">
    <property type="protein sequence ID" value="CAS08182.1"/>
    <property type="molecule type" value="Genomic_DNA"/>
</dbReference>
<dbReference type="RefSeq" id="WP_000053454.1">
    <property type="nucleotide sequence ID" value="NC_011601.1"/>
</dbReference>
<dbReference type="SMR" id="B7ULN0"/>
<dbReference type="KEGG" id="ecg:E2348C_0634"/>
<dbReference type="HOGENOM" id="CLU_017814_2_1_6"/>
<dbReference type="UniPathway" id="UPA00214"/>
<dbReference type="Proteomes" id="UP000008205">
    <property type="component" value="Chromosome"/>
</dbReference>
<dbReference type="GO" id="GO:0005829">
    <property type="term" value="C:cytosol"/>
    <property type="evidence" value="ECO:0007669"/>
    <property type="project" value="TreeGrafter"/>
</dbReference>
<dbReference type="GO" id="GO:0005524">
    <property type="term" value="F:ATP binding"/>
    <property type="evidence" value="ECO:0007669"/>
    <property type="project" value="UniProtKB-UniRule"/>
</dbReference>
<dbReference type="GO" id="GO:0004335">
    <property type="term" value="F:galactokinase activity"/>
    <property type="evidence" value="ECO:0007669"/>
    <property type="project" value="UniProtKB-UniRule"/>
</dbReference>
<dbReference type="GO" id="GO:0000287">
    <property type="term" value="F:magnesium ion binding"/>
    <property type="evidence" value="ECO:0007669"/>
    <property type="project" value="UniProtKB-UniRule"/>
</dbReference>
<dbReference type="GO" id="GO:0006012">
    <property type="term" value="P:galactose metabolic process"/>
    <property type="evidence" value="ECO:0007669"/>
    <property type="project" value="UniProtKB-UniRule"/>
</dbReference>
<dbReference type="FunFam" id="3.30.230.10:FF:000017">
    <property type="entry name" value="Galactokinase"/>
    <property type="match status" value="1"/>
</dbReference>
<dbReference type="FunFam" id="3.30.70.890:FF:000001">
    <property type="entry name" value="Galactokinase"/>
    <property type="match status" value="1"/>
</dbReference>
<dbReference type="Gene3D" id="3.30.230.10">
    <property type="match status" value="1"/>
</dbReference>
<dbReference type="Gene3D" id="3.30.70.890">
    <property type="entry name" value="GHMP kinase, C-terminal domain"/>
    <property type="match status" value="1"/>
</dbReference>
<dbReference type="HAMAP" id="MF_00246">
    <property type="entry name" value="Galactokinase"/>
    <property type="match status" value="1"/>
</dbReference>
<dbReference type="InterPro" id="IPR000705">
    <property type="entry name" value="Galactokinase"/>
</dbReference>
<dbReference type="InterPro" id="IPR022963">
    <property type="entry name" value="Galactokinase_bac"/>
</dbReference>
<dbReference type="InterPro" id="IPR019741">
    <property type="entry name" value="Galactokinase_CS"/>
</dbReference>
<dbReference type="InterPro" id="IPR019539">
    <property type="entry name" value="GalKase_N"/>
</dbReference>
<dbReference type="InterPro" id="IPR013750">
    <property type="entry name" value="GHMP_kinase_C_dom"/>
</dbReference>
<dbReference type="InterPro" id="IPR036554">
    <property type="entry name" value="GHMP_kinase_C_sf"/>
</dbReference>
<dbReference type="InterPro" id="IPR006204">
    <property type="entry name" value="GHMP_kinase_N_dom"/>
</dbReference>
<dbReference type="InterPro" id="IPR006203">
    <property type="entry name" value="GHMP_knse_ATP-bd_CS"/>
</dbReference>
<dbReference type="InterPro" id="IPR006206">
    <property type="entry name" value="Mevalonate/galactokinase"/>
</dbReference>
<dbReference type="InterPro" id="IPR020568">
    <property type="entry name" value="Ribosomal_Su5_D2-typ_SF"/>
</dbReference>
<dbReference type="InterPro" id="IPR014721">
    <property type="entry name" value="Ribsml_uS5_D2-typ_fold_subgr"/>
</dbReference>
<dbReference type="NCBIfam" id="TIGR00131">
    <property type="entry name" value="gal_kin"/>
    <property type="match status" value="1"/>
</dbReference>
<dbReference type="NCBIfam" id="NF003472">
    <property type="entry name" value="PRK05101.1"/>
    <property type="match status" value="1"/>
</dbReference>
<dbReference type="PANTHER" id="PTHR10457:SF7">
    <property type="entry name" value="GALACTOKINASE-RELATED"/>
    <property type="match status" value="1"/>
</dbReference>
<dbReference type="PANTHER" id="PTHR10457">
    <property type="entry name" value="MEVALONATE KINASE/GALACTOKINASE"/>
    <property type="match status" value="1"/>
</dbReference>
<dbReference type="Pfam" id="PF10509">
    <property type="entry name" value="GalKase_gal_bdg"/>
    <property type="match status" value="1"/>
</dbReference>
<dbReference type="Pfam" id="PF08544">
    <property type="entry name" value="GHMP_kinases_C"/>
    <property type="match status" value="1"/>
</dbReference>
<dbReference type="Pfam" id="PF00288">
    <property type="entry name" value="GHMP_kinases_N"/>
    <property type="match status" value="1"/>
</dbReference>
<dbReference type="PIRSF" id="PIRSF000530">
    <property type="entry name" value="Galactokinase"/>
    <property type="match status" value="1"/>
</dbReference>
<dbReference type="PRINTS" id="PR00473">
    <property type="entry name" value="GALCTOKINASE"/>
</dbReference>
<dbReference type="PRINTS" id="PR00959">
    <property type="entry name" value="MEVGALKINASE"/>
</dbReference>
<dbReference type="SUPFAM" id="SSF55060">
    <property type="entry name" value="GHMP Kinase, C-terminal domain"/>
    <property type="match status" value="1"/>
</dbReference>
<dbReference type="SUPFAM" id="SSF54211">
    <property type="entry name" value="Ribosomal protein S5 domain 2-like"/>
    <property type="match status" value="1"/>
</dbReference>
<dbReference type="PROSITE" id="PS00106">
    <property type="entry name" value="GALACTOKINASE"/>
    <property type="match status" value="1"/>
</dbReference>
<dbReference type="PROSITE" id="PS00627">
    <property type="entry name" value="GHMP_KINASES_ATP"/>
    <property type="match status" value="1"/>
</dbReference>
<organism>
    <name type="scientific">Escherichia coli O127:H6 (strain E2348/69 / EPEC)</name>
    <dbReference type="NCBI Taxonomy" id="574521"/>
    <lineage>
        <taxon>Bacteria</taxon>
        <taxon>Pseudomonadati</taxon>
        <taxon>Pseudomonadota</taxon>
        <taxon>Gammaproteobacteria</taxon>
        <taxon>Enterobacterales</taxon>
        <taxon>Enterobacteriaceae</taxon>
        <taxon>Escherichia</taxon>
    </lineage>
</organism>